<accession>Q9WZS8</accession>
<keyword id="KW-0030">Aminoacyl-tRNA synthetase</keyword>
<keyword id="KW-0067">ATP-binding</keyword>
<keyword id="KW-0963">Cytoplasm</keyword>
<keyword id="KW-0436">Ligase</keyword>
<keyword id="KW-0460">Magnesium</keyword>
<keyword id="KW-0479">Metal-binding</keyword>
<keyword id="KW-0547">Nucleotide-binding</keyword>
<keyword id="KW-0648">Protein biosynthesis</keyword>
<keyword id="KW-1185">Reference proteome</keyword>
<evidence type="ECO:0000250" key="1"/>
<evidence type="ECO:0000305" key="2"/>
<dbReference type="EC" id="6.1.1.20"/>
<dbReference type="EMBL" id="AE000512">
    <property type="protein sequence ID" value="AAD35903.1"/>
    <property type="molecule type" value="Genomic_DNA"/>
</dbReference>
<dbReference type="PIR" id="H72329">
    <property type="entry name" value="H72329"/>
</dbReference>
<dbReference type="RefSeq" id="NP_228630.1">
    <property type="nucleotide sequence ID" value="NC_000853.1"/>
</dbReference>
<dbReference type="RefSeq" id="WP_004080838.1">
    <property type="nucleotide sequence ID" value="NZ_CP011107.1"/>
</dbReference>
<dbReference type="SMR" id="Q9WZS8"/>
<dbReference type="FunCoup" id="Q9WZS8">
    <property type="interactions" value="371"/>
</dbReference>
<dbReference type="STRING" id="243274.TM_0821"/>
<dbReference type="PaxDb" id="243274-THEMA_00535"/>
<dbReference type="EnsemblBacteria" id="AAD35903">
    <property type="protein sequence ID" value="AAD35903"/>
    <property type="gene ID" value="TM_0821"/>
</dbReference>
<dbReference type="KEGG" id="tma:TM0821"/>
<dbReference type="KEGG" id="tmi:THEMA_00535"/>
<dbReference type="KEGG" id="tmm:Tmari_0822"/>
<dbReference type="KEGG" id="tmw:THMA_0842"/>
<dbReference type="eggNOG" id="COG0016">
    <property type="taxonomic scope" value="Bacteria"/>
</dbReference>
<dbReference type="InParanoid" id="Q9WZS8"/>
<dbReference type="OrthoDB" id="9800719at2"/>
<dbReference type="Proteomes" id="UP000008183">
    <property type="component" value="Chromosome"/>
</dbReference>
<dbReference type="GO" id="GO:0005737">
    <property type="term" value="C:cytoplasm"/>
    <property type="evidence" value="ECO:0000318"/>
    <property type="project" value="GO_Central"/>
</dbReference>
<dbReference type="GO" id="GO:0005524">
    <property type="term" value="F:ATP binding"/>
    <property type="evidence" value="ECO:0007669"/>
    <property type="project" value="UniProtKB-UniRule"/>
</dbReference>
<dbReference type="GO" id="GO:0000287">
    <property type="term" value="F:magnesium ion binding"/>
    <property type="evidence" value="ECO:0007669"/>
    <property type="project" value="UniProtKB-UniRule"/>
</dbReference>
<dbReference type="GO" id="GO:0004826">
    <property type="term" value="F:phenylalanine-tRNA ligase activity"/>
    <property type="evidence" value="ECO:0000318"/>
    <property type="project" value="GO_Central"/>
</dbReference>
<dbReference type="GO" id="GO:0000049">
    <property type="term" value="F:tRNA binding"/>
    <property type="evidence" value="ECO:0007669"/>
    <property type="project" value="InterPro"/>
</dbReference>
<dbReference type="GO" id="GO:0006432">
    <property type="term" value="P:phenylalanyl-tRNA aminoacylation"/>
    <property type="evidence" value="ECO:0000318"/>
    <property type="project" value="GO_Central"/>
</dbReference>
<dbReference type="CDD" id="cd00496">
    <property type="entry name" value="PheRS_alpha_core"/>
    <property type="match status" value="1"/>
</dbReference>
<dbReference type="FunFam" id="3.30.930.10:FF:000003">
    <property type="entry name" value="Phenylalanine--tRNA ligase alpha subunit"/>
    <property type="match status" value="1"/>
</dbReference>
<dbReference type="Gene3D" id="3.30.930.10">
    <property type="entry name" value="Bira Bifunctional Protein, Domain 2"/>
    <property type="match status" value="1"/>
</dbReference>
<dbReference type="HAMAP" id="MF_00281">
    <property type="entry name" value="Phe_tRNA_synth_alpha1"/>
    <property type="match status" value="1"/>
</dbReference>
<dbReference type="InterPro" id="IPR006195">
    <property type="entry name" value="aa-tRNA-synth_II"/>
</dbReference>
<dbReference type="InterPro" id="IPR045864">
    <property type="entry name" value="aa-tRNA-synth_II/BPL/LPL"/>
</dbReference>
<dbReference type="InterPro" id="IPR004529">
    <property type="entry name" value="Phe-tRNA-synth_IIc_asu"/>
</dbReference>
<dbReference type="InterPro" id="IPR004188">
    <property type="entry name" value="Phe-tRNA_ligase_II_N"/>
</dbReference>
<dbReference type="InterPro" id="IPR022911">
    <property type="entry name" value="Phe_tRNA_ligase_alpha1_bac"/>
</dbReference>
<dbReference type="InterPro" id="IPR002319">
    <property type="entry name" value="Phenylalanyl-tRNA_Synthase"/>
</dbReference>
<dbReference type="InterPro" id="IPR010978">
    <property type="entry name" value="tRNA-bd_arm"/>
</dbReference>
<dbReference type="NCBIfam" id="TIGR00468">
    <property type="entry name" value="pheS"/>
    <property type="match status" value="1"/>
</dbReference>
<dbReference type="PANTHER" id="PTHR11538:SF41">
    <property type="entry name" value="PHENYLALANINE--TRNA LIGASE, MITOCHONDRIAL"/>
    <property type="match status" value="1"/>
</dbReference>
<dbReference type="PANTHER" id="PTHR11538">
    <property type="entry name" value="PHENYLALANYL-TRNA SYNTHETASE"/>
    <property type="match status" value="1"/>
</dbReference>
<dbReference type="Pfam" id="PF02912">
    <property type="entry name" value="Phe_tRNA-synt_N"/>
    <property type="match status" value="1"/>
</dbReference>
<dbReference type="Pfam" id="PF01409">
    <property type="entry name" value="tRNA-synt_2d"/>
    <property type="match status" value="1"/>
</dbReference>
<dbReference type="SUPFAM" id="SSF55681">
    <property type="entry name" value="Class II aaRS and biotin synthetases"/>
    <property type="match status" value="1"/>
</dbReference>
<dbReference type="SUPFAM" id="SSF46589">
    <property type="entry name" value="tRNA-binding arm"/>
    <property type="match status" value="1"/>
</dbReference>
<dbReference type="PROSITE" id="PS50862">
    <property type="entry name" value="AA_TRNA_LIGASE_II"/>
    <property type="match status" value="1"/>
</dbReference>
<name>SYFA_THEMA</name>
<proteinExistence type="inferred from homology"/>
<organism>
    <name type="scientific">Thermotoga maritima (strain ATCC 43589 / DSM 3109 / JCM 10099 / NBRC 100826 / MSB8)</name>
    <dbReference type="NCBI Taxonomy" id="243274"/>
    <lineage>
        <taxon>Bacteria</taxon>
        <taxon>Thermotogati</taxon>
        <taxon>Thermotogota</taxon>
        <taxon>Thermotogae</taxon>
        <taxon>Thermotogales</taxon>
        <taxon>Thermotogaceae</taxon>
        <taxon>Thermotoga</taxon>
    </lineage>
</organism>
<protein>
    <recommendedName>
        <fullName>Phenylalanine--tRNA ligase alpha subunit</fullName>
        <ecNumber>6.1.1.20</ecNumber>
    </recommendedName>
    <alternativeName>
        <fullName>Phenylalanyl-tRNA synthetase alpha subunit</fullName>
        <shortName>PheRS</shortName>
    </alternativeName>
</protein>
<feature type="chain" id="PRO_0000126783" description="Phenylalanine--tRNA ligase alpha subunit">
    <location>
        <begin position="1"/>
        <end position="325"/>
    </location>
</feature>
<feature type="binding site" evidence="1">
    <location>
        <position position="251"/>
    </location>
    <ligand>
        <name>Mg(2+)</name>
        <dbReference type="ChEBI" id="CHEBI:18420"/>
        <note>shared with beta subunit</note>
    </ligand>
</feature>
<gene>
    <name type="primary">pheS</name>
    <name type="ordered locus">TM_0821</name>
</gene>
<comment type="catalytic activity">
    <reaction>
        <text>tRNA(Phe) + L-phenylalanine + ATP = L-phenylalanyl-tRNA(Phe) + AMP + diphosphate + H(+)</text>
        <dbReference type="Rhea" id="RHEA:19413"/>
        <dbReference type="Rhea" id="RHEA-COMP:9668"/>
        <dbReference type="Rhea" id="RHEA-COMP:9699"/>
        <dbReference type="ChEBI" id="CHEBI:15378"/>
        <dbReference type="ChEBI" id="CHEBI:30616"/>
        <dbReference type="ChEBI" id="CHEBI:33019"/>
        <dbReference type="ChEBI" id="CHEBI:58095"/>
        <dbReference type="ChEBI" id="CHEBI:78442"/>
        <dbReference type="ChEBI" id="CHEBI:78531"/>
        <dbReference type="ChEBI" id="CHEBI:456215"/>
        <dbReference type="EC" id="6.1.1.20"/>
    </reaction>
</comment>
<comment type="cofactor">
    <cofactor evidence="1">
        <name>Mg(2+)</name>
        <dbReference type="ChEBI" id="CHEBI:18420"/>
    </cofactor>
    <text evidence="1">Binds 2 magnesium ions per tetramer.</text>
</comment>
<comment type="subunit">
    <text evidence="1">Tetramer of two alpha and two beta subunits.</text>
</comment>
<comment type="subcellular location">
    <subcellularLocation>
        <location evidence="1">Cytoplasm</location>
    </subcellularLocation>
</comment>
<comment type="similarity">
    <text evidence="2">Belongs to the class-II aminoacyl-tRNA synthetase family. Phe-tRNA synthetase alpha subunit type 1 subfamily.</text>
</comment>
<sequence>MEIEAVEKEAIEKLSKISNVQELESFRIEFLGKKGKITGLMKNLKNLPPEERPAYGKRVNELREKIEKLFEEKRQQIQRILEQEKMEKMRIDVTVPGARRKLGHSHPVLKVMEEIERIFVSMGFDVVEGPEIETTWHNFDALNTPEWHPARDEHDSFYITDDLLLRTHTSPVQIRTMLERKPPIAIISPGKVYRRDYDATHLPMFHQVEGLHVDRDLSVAHLKFTLEEFARRMFGEGAKVRLRPSFFPFTEPSFEVDVYLSGYGWLEILGAGMVDPNVFLNVGYDPEEWTGYAFGMGVERIAMLKYGIADIREFVRNDVRFLSSY</sequence>
<reference key="1">
    <citation type="journal article" date="1999" name="Nature">
        <title>Evidence for lateral gene transfer between Archaea and Bacteria from genome sequence of Thermotoga maritima.</title>
        <authorList>
            <person name="Nelson K.E."/>
            <person name="Clayton R.A."/>
            <person name="Gill S.R."/>
            <person name="Gwinn M.L."/>
            <person name="Dodson R.J."/>
            <person name="Haft D.H."/>
            <person name="Hickey E.K."/>
            <person name="Peterson J.D."/>
            <person name="Nelson W.C."/>
            <person name="Ketchum K.A."/>
            <person name="McDonald L.A."/>
            <person name="Utterback T.R."/>
            <person name="Malek J.A."/>
            <person name="Linher K.D."/>
            <person name="Garrett M.M."/>
            <person name="Stewart A.M."/>
            <person name="Cotton M.D."/>
            <person name="Pratt M.S."/>
            <person name="Phillips C.A."/>
            <person name="Richardson D.L."/>
            <person name="Heidelberg J.F."/>
            <person name="Sutton G.G."/>
            <person name="Fleischmann R.D."/>
            <person name="Eisen J.A."/>
            <person name="White O."/>
            <person name="Salzberg S.L."/>
            <person name="Smith H.O."/>
            <person name="Venter J.C."/>
            <person name="Fraser C.M."/>
        </authorList>
    </citation>
    <scope>NUCLEOTIDE SEQUENCE [LARGE SCALE GENOMIC DNA]</scope>
    <source>
        <strain>ATCC 43589 / DSM 3109 / JCM 10099 / NBRC 100826 / MSB8</strain>
    </source>
</reference>